<organism>
    <name type="scientific">Streptococcus agalactiae serotype V (strain ATCC BAA-611 / 2603 V/R)</name>
    <dbReference type="NCBI Taxonomy" id="208435"/>
    <lineage>
        <taxon>Bacteria</taxon>
        <taxon>Bacillati</taxon>
        <taxon>Bacillota</taxon>
        <taxon>Bacilli</taxon>
        <taxon>Lactobacillales</taxon>
        <taxon>Streptococcaceae</taxon>
        <taxon>Streptococcus</taxon>
    </lineage>
</organism>
<comment type="function">
    <text evidence="1">Participates in chromosomal partition during cell division. May act via the formation of a condensin-like complex containing Smc and ScpB that pull DNA away from mid-cell into both cell halves.</text>
</comment>
<comment type="subunit">
    <text evidence="1">Component of a cohesin-like complex composed of ScpA, ScpB and the Smc homodimer, in which ScpA and ScpB bind to the head domain of Smc. The presence of the three proteins is required for the association of the complex with DNA.</text>
</comment>
<comment type="subcellular location">
    <subcellularLocation>
        <location evidence="1">Cytoplasm</location>
    </subcellularLocation>
    <text evidence="1">Associated with two foci at the outer edges of the nucleoid region in young cells, and at four foci within both cell halves in older cells.</text>
</comment>
<comment type="similarity">
    <text evidence="1">Belongs to the ScpA family.</text>
</comment>
<name>SCPA_STRA5</name>
<sequence>MDIKLKDFEGPLDLLLHLVSKYEVDIYDVPIVEVIEQYLAYIATLQAMRLEVAGEYMLMASQLMLIKSRNLLPKVVESNPIEDDPEMELLSQLEEYRRFKVLSEELANQHQERAKYFSKPKQEVIFEDAILLHDKSVMDLFLTFSQMMSQKQKELSNSQTVIEKEDYRIEDMMIVIERHFNLKKKTTLQEVFADCQTKSEMITLFLAMLELIKLHQITVEQDSNFSQVILRKEEK</sequence>
<evidence type="ECO:0000255" key="1">
    <source>
        <dbReference type="HAMAP-Rule" id="MF_01805"/>
    </source>
</evidence>
<keyword id="KW-0131">Cell cycle</keyword>
<keyword id="KW-0132">Cell division</keyword>
<keyword id="KW-0159">Chromosome partition</keyword>
<keyword id="KW-0963">Cytoplasm</keyword>
<keyword id="KW-1185">Reference proteome</keyword>
<dbReference type="EMBL" id="AE009948">
    <property type="protein sequence ID" value="AAN00459.1"/>
    <property type="molecule type" value="Genomic_DNA"/>
</dbReference>
<dbReference type="RefSeq" id="NP_688586.1">
    <property type="nucleotide sequence ID" value="NC_004116.1"/>
</dbReference>
<dbReference type="RefSeq" id="WP_000351869.1">
    <property type="nucleotide sequence ID" value="NC_004116.1"/>
</dbReference>
<dbReference type="SMR" id="Q7ZAL1"/>
<dbReference type="STRING" id="208435.SAG1595"/>
<dbReference type="DNASU" id="1014404"/>
<dbReference type="KEGG" id="sag:SAG1595"/>
<dbReference type="PATRIC" id="fig|208435.3.peg.1605"/>
<dbReference type="HOGENOM" id="CLU_038686_3_3_9"/>
<dbReference type="OrthoDB" id="9811016at2"/>
<dbReference type="Proteomes" id="UP000000821">
    <property type="component" value="Chromosome"/>
</dbReference>
<dbReference type="GO" id="GO:0005737">
    <property type="term" value="C:cytoplasm"/>
    <property type="evidence" value="ECO:0007669"/>
    <property type="project" value="UniProtKB-SubCell"/>
</dbReference>
<dbReference type="GO" id="GO:0051301">
    <property type="term" value="P:cell division"/>
    <property type="evidence" value="ECO:0007669"/>
    <property type="project" value="UniProtKB-KW"/>
</dbReference>
<dbReference type="GO" id="GO:0007059">
    <property type="term" value="P:chromosome segregation"/>
    <property type="evidence" value="ECO:0007669"/>
    <property type="project" value="UniProtKB-UniRule"/>
</dbReference>
<dbReference type="GO" id="GO:0006260">
    <property type="term" value="P:DNA replication"/>
    <property type="evidence" value="ECO:0007669"/>
    <property type="project" value="UniProtKB-UniRule"/>
</dbReference>
<dbReference type="Gene3D" id="6.10.250.2410">
    <property type="match status" value="1"/>
</dbReference>
<dbReference type="HAMAP" id="MF_01805">
    <property type="entry name" value="ScpA"/>
    <property type="match status" value="1"/>
</dbReference>
<dbReference type="InterPro" id="IPR003768">
    <property type="entry name" value="ScpA"/>
</dbReference>
<dbReference type="NCBIfam" id="NF000993">
    <property type="entry name" value="PRK00104.1-2"/>
    <property type="match status" value="1"/>
</dbReference>
<dbReference type="PANTHER" id="PTHR33969">
    <property type="entry name" value="SEGREGATION AND CONDENSATION PROTEIN A"/>
    <property type="match status" value="1"/>
</dbReference>
<dbReference type="PANTHER" id="PTHR33969:SF2">
    <property type="entry name" value="SEGREGATION AND CONDENSATION PROTEIN A"/>
    <property type="match status" value="1"/>
</dbReference>
<dbReference type="Pfam" id="PF02616">
    <property type="entry name" value="SMC_ScpA"/>
    <property type="match status" value="1"/>
</dbReference>
<feature type="chain" id="PRO_0000211111" description="Segregation and condensation protein A">
    <location>
        <begin position="1"/>
        <end position="235"/>
    </location>
</feature>
<gene>
    <name evidence="1" type="primary">scpA</name>
    <name type="ordered locus">SAG1595</name>
</gene>
<reference key="1">
    <citation type="journal article" date="2002" name="Proc. Natl. Acad. Sci. U.S.A.">
        <title>Complete genome sequence and comparative genomic analysis of an emerging human pathogen, serotype V Streptococcus agalactiae.</title>
        <authorList>
            <person name="Tettelin H."/>
            <person name="Masignani V."/>
            <person name="Cieslewicz M.J."/>
            <person name="Eisen J.A."/>
            <person name="Peterson S.N."/>
            <person name="Wessels M.R."/>
            <person name="Paulsen I.T."/>
            <person name="Nelson K.E."/>
            <person name="Margarit I."/>
            <person name="Read T.D."/>
            <person name="Madoff L.C."/>
            <person name="Wolf A.M."/>
            <person name="Beanan M.J."/>
            <person name="Brinkac L.M."/>
            <person name="Daugherty S.C."/>
            <person name="DeBoy R.T."/>
            <person name="Durkin A.S."/>
            <person name="Kolonay J.F."/>
            <person name="Madupu R."/>
            <person name="Lewis M.R."/>
            <person name="Radune D."/>
            <person name="Fedorova N.B."/>
            <person name="Scanlan D."/>
            <person name="Khouri H.M."/>
            <person name="Mulligan S."/>
            <person name="Carty H.A."/>
            <person name="Cline R.T."/>
            <person name="Van Aken S.E."/>
            <person name="Gill J."/>
            <person name="Scarselli M."/>
            <person name="Mora M."/>
            <person name="Iacobini E.T."/>
            <person name="Brettoni C."/>
            <person name="Galli G."/>
            <person name="Mariani M."/>
            <person name="Vegni F."/>
            <person name="Maione D."/>
            <person name="Rinaudo D."/>
            <person name="Rappuoli R."/>
            <person name="Telford J.L."/>
            <person name="Kasper D.L."/>
            <person name="Grandi G."/>
            <person name="Fraser C.M."/>
        </authorList>
    </citation>
    <scope>NUCLEOTIDE SEQUENCE [LARGE SCALE GENOMIC DNA]</scope>
    <source>
        <strain>ATCC BAA-611 / 2603 V/R</strain>
    </source>
</reference>
<protein>
    <recommendedName>
        <fullName evidence="1">Segregation and condensation protein A</fullName>
    </recommendedName>
</protein>
<accession>Q7ZAL1</accession>
<proteinExistence type="inferred from homology"/>